<dbReference type="EC" id="6.3.4.19" evidence="1"/>
<dbReference type="EMBL" id="AL646052">
    <property type="protein sequence ID" value="CAD14872.1"/>
    <property type="molecule type" value="Genomic_DNA"/>
</dbReference>
<dbReference type="RefSeq" id="WP_011001120.1">
    <property type="nucleotide sequence ID" value="NC_003295.1"/>
</dbReference>
<dbReference type="SMR" id="Q8Y074"/>
<dbReference type="STRING" id="267608.RSc1170"/>
<dbReference type="EnsemblBacteria" id="CAD14872">
    <property type="protein sequence ID" value="CAD14872"/>
    <property type="gene ID" value="RSc1170"/>
</dbReference>
<dbReference type="KEGG" id="rso:RSc1170"/>
<dbReference type="eggNOG" id="COG0037">
    <property type="taxonomic scope" value="Bacteria"/>
</dbReference>
<dbReference type="HOGENOM" id="CLU_018869_2_0_4"/>
<dbReference type="Proteomes" id="UP000001436">
    <property type="component" value="Chromosome"/>
</dbReference>
<dbReference type="GO" id="GO:0005737">
    <property type="term" value="C:cytoplasm"/>
    <property type="evidence" value="ECO:0007669"/>
    <property type="project" value="UniProtKB-SubCell"/>
</dbReference>
<dbReference type="GO" id="GO:0005524">
    <property type="term" value="F:ATP binding"/>
    <property type="evidence" value="ECO:0007669"/>
    <property type="project" value="UniProtKB-UniRule"/>
</dbReference>
<dbReference type="GO" id="GO:0032267">
    <property type="term" value="F:tRNA(Ile)-lysidine synthase activity"/>
    <property type="evidence" value="ECO:0007669"/>
    <property type="project" value="UniProtKB-EC"/>
</dbReference>
<dbReference type="GO" id="GO:0006400">
    <property type="term" value="P:tRNA modification"/>
    <property type="evidence" value="ECO:0007669"/>
    <property type="project" value="UniProtKB-UniRule"/>
</dbReference>
<dbReference type="CDD" id="cd01992">
    <property type="entry name" value="TilS_N"/>
    <property type="match status" value="1"/>
</dbReference>
<dbReference type="Gene3D" id="1.20.59.20">
    <property type="match status" value="1"/>
</dbReference>
<dbReference type="Gene3D" id="3.40.50.620">
    <property type="entry name" value="HUPs"/>
    <property type="match status" value="1"/>
</dbReference>
<dbReference type="HAMAP" id="MF_01161">
    <property type="entry name" value="tRNA_Ile_lys_synt"/>
    <property type="match status" value="1"/>
</dbReference>
<dbReference type="InterPro" id="IPR012796">
    <property type="entry name" value="Lysidine-tRNA-synth_C"/>
</dbReference>
<dbReference type="InterPro" id="IPR014729">
    <property type="entry name" value="Rossmann-like_a/b/a_fold"/>
</dbReference>
<dbReference type="InterPro" id="IPR011063">
    <property type="entry name" value="TilS/TtcA_N"/>
</dbReference>
<dbReference type="InterPro" id="IPR012094">
    <property type="entry name" value="tRNA_Ile_lys_synt"/>
</dbReference>
<dbReference type="InterPro" id="IPR012795">
    <property type="entry name" value="tRNA_Ile_lys_synt_N"/>
</dbReference>
<dbReference type="InterPro" id="IPR015262">
    <property type="entry name" value="tRNA_Ile_lys_synt_subst-bd"/>
</dbReference>
<dbReference type="NCBIfam" id="TIGR02433">
    <property type="entry name" value="lysidine_TilS_C"/>
    <property type="match status" value="1"/>
</dbReference>
<dbReference type="NCBIfam" id="TIGR02432">
    <property type="entry name" value="lysidine_TilS_N"/>
    <property type="match status" value="1"/>
</dbReference>
<dbReference type="PANTHER" id="PTHR43033">
    <property type="entry name" value="TRNA(ILE)-LYSIDINE SYNTHASE-RELATED"/>
    <property type="match status" value="1"/>
</dbReference>
<dbReference type="PANTHER" id="PTHR43033:SF1">
    <property type="entry name" value="TRNA(ILE)-LYSIDINE SYNTHASE-RELATED"/>
    <property type="match status" value="1"/>
</dbReference>
<dbReference type="Pfam" id="PF01171">
    <property type="entry name" value="ATP_bind_3"/>
    <property type="match status" value="1"/>
</dbReference>
<dbReference type="Pfam" id="PF09179">
    <property type="entry name" value="TilS"/>
    <property type="match status" value="1"/>
</dbReference>
<dbReference type="Pfam" id="PF11734">
    <property type="entry name" value="TilS_C"/>
    <property type="match status" value="1"/>
</dbReference>
<dbReference type="SMART" id="SM00977">
    <property type="entry name" value="TilS_C"/>
    <property type="match status" value="1"/>
</dbReference>
<dbReference type="SUPFAM" id="SSF52402">
    <property type="entry name" value="Adenine nucleotide alpha hydrolases-like"/>
    <property type="match status" value="1"/>
</dbReference>
<dbReference type="SUPFAM" id="SSF82829">
    <property type="entry name" value="MesJ substrate recognition domain-like"/>
    <property type="match status" value="1"/>
</dbReference>
<dbReference type="SUPFAM" id="SSF56037">
    <property type="entry name" value="PheT/TilS domain"/>
    <property type="match status" value="1"/>
</dbReference>
<proteinExistence type="inferred from homology"/>
<comment type="function">
    <text evidence="1">Ligates lysine onto the cytidine present at position 34 of the AUA codon-specific tRNA(Ile) that contains the anticodon CAU, in an ATP-dependent manner. Cytidine is converted to lysidine, thus changing the amino acid specificity of the tRNA from methionine to isoleucine.</text>
</comment>
<comment type="catalytic activity">
    <reaction evidence="1">
        <text>cytidine(34) in tRNA(Ile2) + L-lysine + ATP = lysidine(34) in tRNA(Ile2) + AMP + diphosphate + H(+)</text>
        <dbReference type="Rhea" id="RHEA:43744"/>
        <dbReference type="Rhea" id="RHEA-COMP:10625"/>
        <dbReference type="Rhea" id="RHEA-COMP:10670"/>
        <dbReference type="ChEBI" id="CHEBI:15378"/>
        <dbReference type="ChEBI" id="CHEBI:30616"/>
        <dbReference type="ChEBI" id="CHEBI:32551"/>
        <dbReference type="ChEBI" id="CHEBI:33019"/>
        <dbReference type="ChEBI" id="CHEBI:82748"/>
        <dbReference type="ChEBI" id="CHEBI:83665"/>
        <dbReference type="ChEBI" id="CHEBI:456215"/>
        <dbReference type="EC" id="6.3.4.19"/>
    </reaction>
</comment>
<comment type="subcellular location">
    <subcellularLocation>
        <location evidence="1">Cytoplasm</location>
    </subcellularLocation>
</comment>
<comment type="domain">
    <text>The N-terminal region contains the highly conserved SGGXDS motif, predicted to be a P-loop motif involved in ATP binding.</text>
</comment>
<comment type="similarity">
    <text evidence="1">Belongs to the tRNA(Ile)-lysidine synthase family.</text>
</comment>
<sequence length="462" mass="48155">MLLVDKVAQRVVACAAFVVSGGVPTVAVALSGGRDSAALLHAVAAWRDAAGVPVRLVALHIHHGLQADADAWEAACARMAAAVGAAFRVRRVRVSTDAGRGIEEAAREARYAALDALCAETGATLLLTAHHLDDQAETVLLQLLRGAGLDGLSAMPMARERRVTLLRPWLDVPRGDIEAYARAHALAWVEDPSNGDARYARNALRPLLAGMAGHFPAYRASLARSAAHLAEAAALIEEVAQTDLARIAPAGTLAVAGLAALSGPRQRAALRAWLAGAGLRAVSSRRLEDLRAQLLGARADGAPCVRLPGAQVRRYRGQAWIEAAGQPGAGPADCPIAVSRFDPARAEVQRVDVAAWGGALLFSPAQAEGIDARILQAPLSLAARRGGERIVLRPGGPSRALKQAYQEAGIPAWARARLPLLYAGERLVFAAGLGPDRSAVAMGSGWHVAWLPAVGQDGLDAG</sequence>
<feature type="chain" id="PRO_0000181751" description="tRNA(Ile)-lysidine synthase">
    <location>
        <begin position="1"/>
        <end position="462"/>
    </location>
</feature>
<feature type="binding site" evidence="1">
    <location>
        <begin position="31"/>
        <end position="36"/>
    </location>
    <ligand>
        <name>ATP</name>
        <dbReference type="ChEBI" id="CHEBI:30616"/>
    </ligand>
</feature>
<gene>
    <name evidence="1" type="primary">tilS</name>
    <name type="ordered locus">RSc1170</name>
    <name type="ORF">RS04559</name>
</gene>
<protein>
    <recommendedName>
        <fullName evidence="1">tRNA(Ile)-lysidine synthase</fullName>
        <ecNumber evidence="1">6.3.4.19</ecNumber>
    </recommendedName>
    <alternativeName>
        <fullName evidence="1">tRNA(Ile)-2-lysyl-cytidine synthase</fullName>
    </alternativeName>
    <alternativeName>
        <fullName evidence="1">tRNA(Ile)-lysidine synthetase</fullName>
    </alternativeName>
</protein>
<accession>Q8Y074</accession>
<evidence type="ECO:0000255" key="1">
    <source>
        <dbReference type="HAMAP-Rule" id="MF_01161"/>
    </source>
</evidence>
<reference key="1">
    <citation type="journal article" date="2002" name="Nature">
        <title>Genome sequence of the plant pathogen Ralstonia solanacearum.</title>
        <authorList>
            <person name="Salanoubat M."/>
            <person name="Genin S."/>
            <person name="Artiguenave F."/>
            <person name="Gouzy J."/>
            <person name="Mangenot S."/>
            <person name="Arlat M."/>
            <person name="Billault A."/>
            <person name="Brottier P."/>
            <person name="Camus J.-C."/>
            <person name="Cattolico L."/>
            <person name="Chandler M."/>
            <person name="Choisne N."/>
            <person name="Claudel-Renard C."/>
            <person name="Cunnac S."/>
            <person name="Demange N."/>
            <person name="Gaspin C."/>
            <person name="Lavie M."/>
            <person name="Moisan A."/>
            <person name="Robert C."/>
            <person name="Saurin W."/>
            <person name="Schiex T."/>
            <person name="Siguier P."/>
            <person name="Thebault P."/>
            <person name="Whalen M."/>
            <person name="Wincker P."/>
            <person name="Levy M."/>
            <person name="Weissenbach J."/>
            <person name="Boucher C.A."/>
        </authorList>
    </citation>
    <scope>NUCLEOTIDE SEQUENCE [LARGE SCALE GENOMIC DNA]</scope>
    <source>
        <strain>ATCC BAA-1114 / GMI1000</strain>
    </source>
</reference>
<name>TILS_RALN1</name>
<organism>
    <name type="scientific">Ralstonia nicotianae (strain ATCC BAA-1114 / GMI1000)</name>
    <name type="common">Ralstonia solanacearum</name>
    <dbReference type="NCBI Taxonomy" id="267608"/>
    <lineage>
        <taxon>Bacteria</taxon>
        <taxon>Pseudomonadati</taxon>
        <taxon>Pseudomonadota</taxon>
        <taxon>Betaproteobacteria</taxon>
        <taxon>Burkholderiales</taxon>
        <taxon>Burkholderiaceae</taxon>
        <taxon>Ralstonia</taxon>
        <taxon>Ralstonia solanacearum species complex</taxon>
    </lineage>
</organism>
<keyword id="KW-0067">ATP-binding</keyword>
<keyword id="KW-0963">Cytoplasm</keyword>
<keyword id="KW-0436">Ligase</keyword>
<keyword id="KW-0547">Nucleotide-binding</keyword>
<keyword id="KW-1185">Reference proteome</keyword>
<keyword id="KW-0819">tRNA processing</keyword>